<dbReference type="EMBL" id="CP000038">
    <property type="protein sequence ID" value="AAZ89447.1"/>
    <property type="molecule type" value="Genomic_DNA"/>
</dbReference>
<dbReference type="RefSeq" id="WP_000140510.1">
    <property type="nucleotide sequence ID" value="NC_007384.1"/>
</dbReference>
<dbReference type="SMR" id="Q3YYG5"/>
<dbReference type="KEGG" id="ssn:SSON_2842"/>
<dbReference type="HOGENOM" id="CLU_066607_3_2_6"/>
<dbReference type="Proteomes" id="UP000002529">
    <property type="component" value="Chromosome"/>
</dbReference>
<dbReference type="GO" id="GO:0005737">
    <property type="term" value="C:cytoplasm"/>
    <property type="evidence" value="ECO:0007669"/>
    <property type="project" value="UniProtKB-SubCell"/>
</dbReference>
<dbReference type="GO" id="GO:0006282">
    <property type="term" value="P:regulation of DNA repair"/>
    <property type="evidence" value="ECO:0007669"/>
    <property type="project" value="UniProtKB-UniRule"/>
</dbReference>
<dbReference type="FunFam" id="1.10.10.10:FF:000133">
    <property type="entry name" value="Regulatory protein RecX"/>
    <property type="match status" value="1"/>
</dbReference>
<dbReference type="FunFam" id="1.10.10.10:FF:000134">
    <property type="entry name" value="Regulatory protein RecX"/>
    <property type="match status" value="1"/>
</dbReference>
<dbReference type="Gene3D" id="1.10.10.10">
    <property type="entry name" value="Winged helix-like DNA-binding domain superfamily/Winged helix DNA-binding domain"/>
    <property type="match status" value="3"/>
</dbReference>
<dbReference type="HAMAP" id="MF_01114">
    <property type="entry name" value="RecX"/>
    <property type="match status" value="1"/>
</dbReference>
<dbReference type="InterPro" id="IPR053926">
    <property type="entry name" value="RecX_HTH_1st"/>
</dbReference>
<dbReference type="InterPro" id="IPR053924">
    <property type="entry name" value="RecX_HTH_2nd"/>
</dbReference>
<dbReference type="InterPro" id="IPR053925">
    <property type="entry name" value="RecX_HTH_3rd"/>
</dbReference>
<dbReference type="InterPro" id="IPR003783">
    <property type="entry name" value="Regulatory_RecX"/>
</dbReference>
<dbReference type="InterPro" id="IPR036388">
    <property type="entry name" value="WH-like_DNA-bd_sf"/>
</dbReference>
<dbReference type="NCBIfam" id="NF001052">
    <property type="entry name" value="PRK00117.1-1"/>
    <property type="match status" value="1"/>
</dbReference>
<dbReference type="PANTHER" id="PTHR33602">
    <property type="entry name" value="REGULATORY PROTEIN RECX FAMILY PROTEIN"/>
    <property type="match status" value="1"/>
</dbReference>
<dbReference type="PANTHER" id="PTHR33602:SF1">
    <property type="entry name" value="REGULATORY PROTEIN RECX FAMILY PROTEIN"/>
    <property type="match status" value="1"/>
</dbReference>
<dbReference type="Pfam" id="PF21982">
    <property type="entry name" value="RecX_HTH1"/>
    <property type="match status" value="1"/>
</dbReference>
<dbReference type="Pfam" id="PF02631">
    <property type="entry name" value="RecX_HTH2"/>
    <property type="match status" value="1"/>
</dbReference>
<dbReference type="Pfam" id="PF21981">
    <property type="entry name" value="RecX_HTH3"/>
    <property type="match status" value="1"/>
</dbReference>
<evidence type="ECO:0000255" key="1">
    <source>
        <dbReference type="HAMAP-Rule" id="MF_01114"/>
    </source>
</evidence>
<keyword id="KW-0963">Cytoplasm</keyword>
<keyword id="KW-1185">Reference proteome</keyword>
<reference key="1">
    <citation type="journal article" date="2005" name="Nucleic Acids Res.">
        <title>Genome dynamics and diversity of Shigella species, the etiologic agents of bacillary dysentery.</title>
        <authorList>
            <person name="Yang F."/>
            <person name="Yang J."/>
            <person name="Zhang X."/>
            <person name="Chen L."/>
            <person name="Jiang Y."/>
            <person name="Yan Y."/>
            <person name="Tang X."/>
            <person name="Wang J."/>
            <person name="Xiong Z."/>
            <person name="Dong J."/>
            <person name="Xue Y."/>
            <person name="Zhu Y."/>
            <person name="Xu X."/>
            <person name="Sun L."/>
            <person name="Chen S."/>
            <person name="Nie H."/>
            <person name="Peng J."/>
            <person name="Xu J."/>
            <person name="Wang Y."/>
            <person name="Yuan Z."/>
            <person name="Wen Y."/>
            <person name="Yao Z."/>
            <person name="Shen Y."/>
            <person name="Qiang B."/>
            <person name="Hou Y."/>
            <person name="Yu J."/>
            <person name="Jin Q."/>
        </authorList>
    </citation>
    <scope>NUCLEOTIDE SEQUENCE [LARGE SCALE GENOMIC DNA]</scope>
    <source>
        <strain>Ss046</strain>
    </source>
</reference>
<organism>
    <name type="scientific">Shigella sonnei (strain Ss046)</name>
    <dbReference type="NCBI Taxonomy" id="300269"/>
    <lineage>
        <taxon>Bacteria</taxon>
        <taxon>Pseudomonadati</taxon>
        <taxon>Pseudomonadota</taxon>
        <taxon>Gammaproteobacteria</taxon>
        <taxon>Enterobacterales</taxon>
        <taxon>Enterobacteriaceae</taxon>
        <taxon>Shigella</taxon>
    </lineage>
</organism>
<proteinExistence type="inferred from homology"/>
<sequence length="166" mass="19395">MTESTSRRPAYARLLDRAVRILAVRDHSEQELRRKLAAPIMGKNGPEEIDATAEDYERVIAWCHEHGYLDDSRFVARFIASRSRKGYGPARIRQELNQKGISREATEKAMRECDIDWCALVRDQATRKYGEPLPTVFSEKVKIQRFLLYRGYLMEDIQDIWLNFAD</sequence>
<name>RECX_SHISS</name>
<feature type="chain" id="PRO_1000065206" description="Regulatory protein RecX">
    <location>
        <begin position="1"/>
        <end position="166"/>
    </location>
</feature>
<gene>
    <name evidence="1" type="primary">recX</name>
    <name type="ordered locus">SSON_2842</name>
</gene>
<accession>Q3YYG5</accession>
<protein>
    <recommendedName>
        <fullName evidence="1">Regulatory protein RecX</fullName>
    </recommendedName>
</protein>
<comment type="function">
    <text evidence="1">Modulates RecA activity.</text>
</comment>
<comment type="subcellular location">
    <subcellularLocation>
        <location evidence="1">Cytoplasm</location>
    </subcellularLocation>
</comment>
<comment type="similarity">
    <text evidence="1">Belongs to the RecX family.</text>
</comment>